<protein>
    <recommendedName>
        <fullName evidence="1">DNA-directed RNA polymerase subunit alpha</fullName>
        <shortName evidence="1">RNAP subunit alpha</shortName>
        <ecNumber evidence="1">2.7.7.6</ecNumber>
    </recommendedName>
    <alternativeName>
        <fullName evidence="1">RNA polymerase subunit alpha</fullName>
    </alternativeName>
    <alternativeName>
        <fullName evidence="1">Transcriptase subunit alpha</fullName>
    </alternativeName>
</protein>
<accession>Q9ZCS9</accession>
<comment type="function">
    <text evidence="1">DNA-dependent RNA polymerase catalyzes the transcription of DNA into RNA using the four ribonucleoside triphosphates as substrates.</text>
</comment>
<comment type="catalytic activity">
    <reaction evidence="1">
        <text>RNA(n) + a ribonucleoside 5'-triphosphate = RNA(n+1) + diphosphate</text>
        <dbReference type="Rhea" id="RHEA:21248"/>
        <dbReference type="Rhea" id="RHEA-COMP:14527"/>
        <dbReference type="Rhea" id="RHEA-COMP:17342"/>
        <dbReference type="ChEBI" id="CHEBI:33019"/>
        <dbReference type="ChEBI" id="CHEBI:61557"/>
        <dbReference type="ChEBI" id="CHEBI:140395"/>
        <dbReference type="EC" id="2.7.7.6"/>
    </reaction>
</comment>
<comment type="subunit">
    <text evidence="1">Homodimer. The RNAP catalytic core consists of 2 alpha, 1 beta, 1 beta' and 1 omega subunit. When a sigma factor is associated with the core the holoenzyme is formed, which can initiate transcription.</text>
</comment>
<comment type="domain">
    <text evidence="1">The N-terminal domain is essential for RNAP assembly and basal transcription, whereas the C-terminal domain is involved in interaction with transcriptional regulators and with upstream promoter elements.</text>
</comment>
<comment type="similarity">
    <text evidence="1">Belongs to the RNA polymerase alpha chain family.</text>
</comment>
<proteinExistence type="inferred from homology"/>
<sequence length="340" mass="38360">MLSLSKNWNTLIKPNRVTYENFPETNNKAKIIVEPLERGFGLTLGNAMRRVLLSSLQGAAITSIKIPAIEHEFSSIPGVQEDVSEVILNIKGIEVKMHVSEKRIIKLKAMGPCVVTAGMIDTGHDVEILNPDHVICNLAKNKQLEMELTCKVGKGYVLSTNSYEDNLPIGEIAIDALFNPVKSVTYKVENTRVGQVTDYDKLIMFVETNGDVLPEMAVGLAARILQEQLQLFIAFEEQEEDKQVKTDSLPFSPYLLKRVDELELSVRSANCLKNDNIIYIGDLVKRTESDMLRTPNFGRKSLNEIKEILAKFNLRFGMDVPDWPPENIQELSKRYEDSYN</sequence>
<reference key="1">
    <citation type="journal article" date="1998" name="Nature">
        <title>The genome sequence of Rickettsia prowazekii and the origin of mitochondria.</title>
        <authorList>
            <person name="Andersson S.G.E."/>
            <person name="Zomorodipour A."/>
            <person name="Andersson J.O."/>
            <person name="Sicheritz-Ponten T."/>
            <person name="Alsmark U.C.M."/>
            <person name="Podowski R.M."/>
            <person name="Naeslund A.K."/>
            <person name="Eriksson A.-S."/>
            <person name="Winkler H.H."/>
            <person name="Kurland C.G."/>
        </authorList>
    </citation>
    <scope>NUCLEOTIDE SEQUENCE [LARGE SCALE GENOMIC DNA]</scope>
    <source>
        <strain>Madrid E</strain>
    </source>
</reference>
<keyword id="KW-0240">DNA-directed RNA polymerase</keyword>
<keyword id="KW-0548">Nucleotidyltransferase</keyword>
<keyword id="KW-1185">Reference proteome</keyword>
<keyword id="KW-0804">Transcription</keyword>
<keyword id="KW-0808">Transferase</keyword>
<name>RPOA_RICPR</name>
<organism>
    <name type="scientific">Rickettsia prowazekii (strain Madrid E)</name>
    <dbReference type="NCBI Taxonomy" id="272947"/>
    <lineage>
        <taxon>Bacteria</taxon>
        <taxon>Pseudomonadati</taxon>
        <taxon>Pseudomonadota</taxon>
        <taxon>Alphaproteobacteria</taxon>
        <taxon>Rickettsiales</taxon>
        <taxon>Rickettsiaceae</taxon>
        <taxon>Rickettsieae</taxon>
        <taxon>Rickettsia</taxon>
        <taxon>typhus group</taxon>
    </lineage>
</organism>
<evidence type="ECO:0000255" key="1">
    <source>
        <dbReference type="HAMAP-Rule" id="MF_00059"/>
    </source>
</evidence>
<feature type="chain" id="PRO_0000175369" description="DNA-directed RNA polymerase subunit alpha">
    <location>
        <begin position="1"/>
        <end position="340"/>
    </location>
</feature>
<feature type="region of interest" description="Alpha N-terminal domain (alpha-NTD)" evidence="1">
    <location>
        <begin position="1"/>
        <end position="236"/>
    </location>
</feature>
<feature type="region of interest" description="Alpha C-terminal domain (alpha-CTD)" evidence="1">
    <location>
        <begin position="251"/>
        <end position="340"/>
    </location>
</feature>
<gene>
    <name evidence="1" type="primary">rpoA</name>
    <name type="ordered locus">RP635</name>
</gene>
<dbReference type="EC" id="2.7.7.6" evidence="1"/>
<dbReference type="EMBL" id="AJ235272">
    <property type="protein sequence ID" value="CAA15075.1"/>
    <property type="molecule type" value="Genomic_DNA"/>
</dbReference>
<dbReference type="PIR" id="A71669">
    <property type="entry name" value="A71669"/>
</dbReference>
<dbReference type="RefSeq" id="NP_220999.1">
    <property type="nucleotide sequence ID" value="NC_000963.1"/>
</dbReference>
<dbReference type="RefSeq" id="WP_004599184.1">
    <property type="nucleotide sequence ID" value="NC_000963.1"/>
</dbReference>
<dbReference type="SMR" id="Q9ZCS9"/>
<dbReference type="STRING" id="272947.gene:17555712"/>
<dbReference type="EnsemblBacteria" id="CAA15075">
    <property type="protein sequence ID" value="CAA15075"/>
    <property type="gene ID" value="CAA15075"/>
</dbReference>
<dbReference type="KEGG" id="rpr:RP635"/>
<dbReference type="PATRIC" id="fig|272947.5.peg.657"/>
<dbReference type="eggNOG" id="COG0202">
    <property type="taxonomic scope" value="Bacteria"/>
</dbReference>
<dbReference type="HOGENOM" id="CLU_053084_0_1_5"/>
<dbReference type="OrthoDB" id="9805706at2"/>
<dbReference type="Proteomes" id="UP000002480">
    <property type="component" value="Chromosome"/>
</dbReference>
<dbReference type="GO" id="GO:0005737">
    <property type="term" value="C:cytoplasm"/>
    <property type="evidence" value="ECO:0007669"/>
    <property type="project" value="UniProtKB-ARBA"/>
</dbReference>
<dbReference type="GO" id="GO:0000428">
    <property type="term" value="C:DNA-directed RNA polymerase complex"/>
    <property type="evidence" value="ECO:0007669"/>
    <property type="project" value="UniProtKB-KW"/>
</dbReference>
<dbReference type="GO" id="GO:0003677">
    <property type="term" value="F:DNA binding"/>
    <property type="evidence" value="ECO:0007669"/>
    <property type="project" value="UniProtKB-UniRule"/>
</dbReference>
<dbReference type="GO" id="GO:0003899">
    <property type="term" value="F:DNA-directed RNA polymerase activity"/>
    <property type="evidence" value="ECO:0007669"/>
    <property type="project" value="UniProtKB-UniRule"/>
</dbReference>
<dbReference type="GO" id="GO:0046983">
    <property type="term" value="F:protein dimerization activity"/>
    <property type="evidence" value="ECO:0007669"/>
    <property type="project" value="InterPro"/>
</dbReference>
<dbReference type="GO" id="GO:0006351">
    <property type="term" value="P:DNA-templated transcription"/>
    <property type="evidence" value="ECO:0007669"/>
    <property type="project" value="UniProtKB-UniRule"/>
</dbReference>
<dbReference type="CDD" id="cd06928">
    <property type="entry name" value="RNAP_alpha_NTD"/>
    <property type="match status" value="1"/>
</dbReference>
<dbReference type="FunFam" id="1.10.150.20:FF:000001">
    <property type="entry name" value="DNA-directed RNA polymerase subunit alpha"/>
    <property type="match status" value="1"/>
</dbReference>
<dbReference type="FunFam" id="2.170.120.12:FF:000001">
    <property type="entry name" value="DNA-directed RNA polymerase subunit alpha"/>
    <property type="match status" value="1"/>
</dbReference>
<dbReference type="Gene3D" id="1.10.150.20">
    <property type="entry name" value="5' to 3' exonuclease, C-terminal subdomain"/>
    <property type="match status" value="1"/>
</dbReference>
<dbReference type="Gene3D" id="2.170.120.12">
    <property type="entry name" value="DNA-directed RNA polymerase, insert domain"/>
    <property type="match status" value="1"/>
</dbReference>
<dbReference type="Gene3D" id="3.30.1360.10">
    <property type="entry name" value="RNA polymerase, RBP11-like subunit"/>
    <property type="match status" value="1"/>
</dbReference>
<dbReference type="HAMAP" id="MF_00059">
    <property type="entry name" value="RNApol_bact_RpoA"/>
    <property type="match status" value="1"/>
</dbReference>
<dbReference type="InterPro" id="IPR011262">
    <property type="entry name" value="DNA-dir_RNA_pol_insert"/>
</dbReference>
<dbReference type="InterPro" id="IPR011263">
    <property type="entry name" value="DNA-dir_RNA_pol_RpoA/D/Rpb3"/>
</dbReference>
<dbReference type="InterPro" id="IPR011773">
    <property type="entry name" value="DNA-dir_RpoA"/>
</dbReference>
<dbReference type="InterPro" id="IPR036603">
    <property type="entry name" value="RBP11-like"/>
</dbReference>
<dbReference type="InterPro" id="IPR011260">
    <property type="entry name" value="RNAP_asu_C"/>
</dbReference>
<dbReference type="InterPro" id="IPR036643">
    <property type="entry name" value="RNApol_insert_sf"/>
</dbReference>
<dbReference type="NCBIfam" id="NF003513">
    <property type="entry name" value="PRK05182.1-2"/>
    <property type="match status" value="1"/>
</dbReference>
<dbReference type="NCBIfam" id="NF003519">
    <property type="entry name" value="PRK05182.2-5"/>
    <property type="match status" value="1"/>
</dbReference>
<dbReference type="NCBIfam" id="TIGR02027">
    <property type="entry name" value="rpoA"/>
    <property type="match status" value="1"/>
</dbReference>
<dbReference type="Pfam" id="PF01000">
    <property type="entry name" value="RNA_pol_A_bac"/>
    <property type="match status" value="1"/>
</dbReference>
<dbReference type="Pfam" id="PF03118">
    <property type="entry name" value="RNA_pol_A_CTD"/>
    <property type="match status" value="1"/>
</dbReference>
<dbReference type="Pfam" id="PF01193">
    <property type="entry name" value="RNA_pol_L"/>
    <property type="match status" value="1"/>
</dbReference>
<dbReference type="SMART" id="SM00662">
    <property type="entry name" value="RPOLD"/>
    <property type="match status" value="1"/>
</dbReference>
<dbReference type="SUPFAM" id="SSF47789">
    <property type="entry name" value="C-terminal domain of RNA polymerase alpha subunit"/>
    <property type="match status" value="1"/>
</dbReference>
<dbReference type="SUPFAM" id="SSF56553">
    <property type="entry name" value="Insert subdomain of RNA polymerase alpha subunit"/>
    <property type="match status" value="1"/>
</dbReference>
<dbReference type="SUPFAM" id="SSF55257">
    <property type="entry name" value="RBP11-like subunits of RNA polymerase"/>
    <property type="match status" value="1"/>
</dbReference>